<feature type="chain" id="PRO_1000079234" description="Chaperone protein DnaK">
    <location>
        <begin position="1"/>
        <end position="642"/>
    </location>
</feature>
<feature type="region of interest" description="Disordered" evidence="2">
    <location>
        <begin position="608"/>
        <end position="642"/>
    </location>
</feature>
<feature type="compositionally biased region" description="Low complexity" evidence="2">
    <location>
        <begin position="608"/>
        <end position="622"/>
    </location>
</feature>
<feature type="compositionally biased region" description="Acidic residues" evidence="2">
    <location>
        <begin position="628"/>
        <end position="642"/>
    </location>
</feature>
<feature type="modified residue" description="Phosphothreonine; by autocatalysis" evidence="1">
    <location>
        <position position="200"/>
    </location>
</feature>
<reference key="1">
    <citation type="journal article" date="2008" name="Genomics">
        <title>Characterization of ST-4821 complex, a unique Neisseria meningitidis clone.</title>
        <authorList>
            <person name="Peng J."/>
            <person name="Yang L."/>
            <person name="Yang F."/>
            <person name="Yang J."/>
            <person name="Yan Y."/>
            <person name="Nie H."/>
            <person name="Zhang X."/>
            <person name="Xiong Z."/>
            <person name="Jiang Y."/>
            <person name="Cheng F."/>
            <person name="Xu X."/>
            <person name="Chen S."/>
            <person name="Sun L."/>
            <person name="Li W."/>
            <person name="Shen Y."/>
            <person name="Shao Z."/>
            <person name="Liang X."/>
            <person name="Xu J."/>
            <person name="Jin Q."/>
        </authorList>
    </citation>
    <scope>NUCLEOTIDE SEQUENCE [LARGE SCALE GENOMIC DNA]</scope>
    <source>
        <strain>053442</strain>
    </source>
</reference>
<organism>
    <name type="scientific">Neisseria meningitidis serogroup C (strain 053442)</name>
    <dbReference type="NCBI Taxonomy" id="374833"/>
    <lineage>
        <taxon>Bacteria</taxon>
        <taxon>Pseudomonadati</taxon>
        <taxon>Pseudomonadota</taxon>
        <taxon>Betaproteobacteria</taxon>
        <taxon>Neisseriales</taxon>
        <taxon>Neisseriaceae</taxon>
        <taxon>Neisseria</taxon>
    </lineage>
</organism>
<name>DNAK_NEIM0</name>
<comment type="function">
    <text evidence="1">Acts as a chaperone.</text>
</comment>
<comment type="induction">
    <text evidence="1">By stress conditions e.g. heat shock.</text>
</comment>
<comment type="similarity">
    <text evidence="1">Belongs to the heat shock protein 70 family.</text>
</comment>
<protein>
    <recommendedName>
        <fullName evidence="1">Chaperone protein DnaK</fullName>
    </recommendedName>
    <alternativeName>
        <fullName evidence="1">HSP70</fullName>
    </alternativeName>
    <alternativeName>
        <fullName evidence="1">Heat shock 70 kDa protein</fullName>
    </alternativeName>
    <alternativeName>
        <fullName evidence="1">Heat shock protein 70</fullName>
    </alternativeName>
</protein>
<gene>
    <name evidence="1" type="primary">dnaK</name>
    <name type="ordered locus">NMCC_0500</name>
</gene>
<accession>A9M296</accession>
<dbReference type="EMBL" id="CP000381">
    <property type="protein sequence ID" value="ABX72700.1"/>
    <property type="molecule type" value="Genomic_DNA"/>
</dbReference>
<dbReference type="RefSeq" id="WP_002243335.1">
    <property type="nucleotide sequence ID" value="NC_010120.1"/>
</dbReference>
<dbReference type="SMR" id="A9M296"/>
<dbReference type="MoonProt" id="A9M296"/>
<dbReference type="KEGG" id="nmn:NMCC_0500"/>
<dbReference type="HOGENOM" id="CLU_005965_2_1_4"/>
<dbReference type="Proteomes" id="UP000001177">
    <property type="component" value="Chromosome"/>
</dbReference>
<dbReference type="GO" id="GO:0005524">
    <property type="term" value="F:ATP binding"/>
    <property type="evidence" value="ECO:0007669"/>
    <property type="project" value="UniProtKB-UniRule"/>
</dbReference>
<dbReference type="GO" id="GO:0140662">
    <property type="term" value="F:ATP-dependent protein folding chaperone"/>
    <property type="evidence" value="ECO:0007669"/>
    <property type="project" value="InterPro"/>
</dbReference>
<dbReference type="GO" id="GO:0051082">
    <property type="term" value="F:unfolded protein binding"/>
    <property type="evidence" value="ECO:0007669"/>
    <property type="project" value="InterPro"/>
</dbReference>
<dbReference type="CDD" id="cd10234">
    <property type="entry name" value="ASKHA_NBD_HSP70_DnaK-like"/>
    <property type="match status" value="1"/>
</dbReference>
<dbReference type="FunFam" id="1.20.1270.10:FF:000034">
    <property type="entry name" value="Chaperone protein DnaK"/>
    <property type="match status" value="1"/>
</dbReference>
<dbReference type="FunFam" id="2.60.34.10:FF:000014">
    <property type="entry name" value="Chaperone protein DnaK HSP70"/>
    <property type="match status" value="1"/>
</dbReference>
<dbReference type="FunFam" id="3.30.420.40:FF:000004">
    <property type="entry name" value="Molecular chaperone DnaK"/>
    <property type="match status" value="1"/>
</dbReference>
<dbReference type="FunFam" id="3.90.640.10:FF:000003">
    <property type="entry name" value="Molecular chaperone DnaK"/>
    <property type="match status" value="1"/>
</dbReference>
<dbReference type="Gene3D" id="1.20.1270.10">
    <property type="match status" value="1"/>
</dbReference>
<dbReference type="Gene3D" id="3.30.420.40">
    <property type="match status" value="2"/>
</dbReference>
<dbReference type="Gene3D" id="3.90.640.10">
    <property type="entry name" value="Actin, Chain A, domain 4"/>
    <property type="match status" value="1"/>
</dbReference>
<dbReference type="Gene3D" id="2.60.34.10">
    <property type="entry name" value="Substrate Binding Domain Of DNAk, Chain A, domain 1"/>
    <property type="match status" value="1"/>
</dbReference>
<dbReference type="HAMAP" id="MF_00332">
    <property type="entry name" value="DnaK"/>
    <property type="match status" value="1"/>
</dbReference>
<dbReference type="InterPro" id="IPR043129">
    <property type="entry name" value="ATPase_NBD"/>
</dbReference>
<dbReference type="InterPro" id="IPR012725">
    <property type="entry name" value="Chaperone_DnaK"/>
</dbReference>
<dbReference type="InterPro" id="IPR018181">
    <property type="entry name" value="Heat_shock_70_CS"/>
</dbReference>
<dbReference type="InterPro" id="IPR029048">
    <property type="entry name" value="HSP70_C_sf"/>
</dbReference>
<dbReference type="InterPro" id="IPR029047">
    <property type="entry name" value="HSP70_peptide-bd_sf"/>
</dbReference>
<dbReference type="InterPro" id="IPR013126">
    <property type="entry name" value="Hsp_70_fam"/>
</dbReference>
<dbReference type="NCBIfam" id="NF001413">
    <property type="entry name" value="PRK00290.1"/>
    <property type="match status" value="1"/>
</dbReference>
<dbReference type="NCBIfam" id="NF003520">
    <property type="entry name" value="PRK05183.1"/>
    <property type="match status" value="1"/>
</dbReference>
<dbReference type="NCBIfam" id="TIGR02350">
    <property type="entry name" value="prok_dnaK"/>
    <property type="match status" value="1"/>
</dbReference>
<dbReference type="PANTHER" id="PTHR19375">
    <property type="entry name" value="HEAT SHOCK PROTEIN 70KDA"/>
    <property type="match status" value="1"/>
</dbReference>
<dbReference type="Pfam" id="PF00012">
    <property type="entry name" value="HSP70"/>
    <property type="match status" value="1"/>
</dbReference>
<dbReference type="PRINTS" id="PR00301">
    <property type="entry name" value="HEATSHOCK70"/>
</dbReference>
<dbReference type="SUPFAM" id="SSF53067">
    <property type="entry name" value="Actin-like ATPase domain"/>
    <property type="match status" value="2"/>
</dbReference>
<dbReference type="SUPFAM" id="SSF100934">
    <property type="entry name" value="Heat shock protein 70kD (HSP70), C-terminal subdomain"/>
    <property type="match status" value="1"/>
</dbReference>
<dbReference type="SUPFAM" id="SSF100920">
    <property type="entry name" value="Heat shock protein 70kD (HSP70), peptide-binding domain"/>
    <property type="match status" value="1"/>
</dbReference>
<dbReference type="PROSITE" id="PS00297">
    <property type="entry name" value="HSP70_1"/>
    <property type="match status" value="1"/>
</dbReference>
<dbReference type="PROSITE" id="PS00329">
    <property type="entry name" value="HSP70_2"/>
    <property type="match status" value="1"/>
</dbReference>
<dbReference type="PROSITE" id="PS01036">
    <property type="entry name" value="HSP70_3"/>
    <property type="match status" value="1"/>
</dbReference>
<sequence>MAKVIGIDLGTTNSCLAISENGQTKVIENAEGARTTPSVIAYLDGGEILVGAPAKRQAVTNAKNTIYAAKRLIGHKFEDKEVQRDIESMPFEIIKANNGDAWVKAQGKELSPPQISAEVLRKMKEAAEAYLGEKVTEAVITVPAYFNDSQRQATKDAGRIAGLDVKRIINEPTAAALAFGMDKGDNKDRKVAVYDLGGGTFDISIIEIANLDGDKQFEVLATNGDTFLGGEDFDQRLIDYIIDEFKKEQGIDLKQDVMALQRLKEAAEKAKIELSSGQQTEINLPYITMDATGPKHLAMKITRAKFESLVEDLIARSIEPCRTALKDAGLSTGDIDDVILVGGQSRMPKVQEAVKAFFGKEPRKDVNPDEAVAVGAAIQGEVLSGGRSDVLLLDVTPLSLGIETMGGVMTKLIQKNTTIPTKASQVFSTAEDNQSAVTIHVLQGERERASANKSLGQFNLGDIAPAPRGMPQIEVTFDIDANGILHVSAKDKGTGKAANITIQGSSGLSEEEIERMVKDAEANAEEDKKLTELVASRNQAEALIHSVKKSLADYGDKLDAAEKEKIEAALKEAEEAVKGDDKTAIDAKAEALGTASQKLGEMVYAQAQAEAQAGESEQANASAKKDDDVVDADFEEVKDDKK</sequence>
<evidence type="ECO:0000255" key="1">
    <source>
        <dbReference type="HAMAP-Rule" id="MF_00332"/>
    </source>
</evidence>
<evidence type="ECO:0000256" key="2">
    <source>
        <dbReference type="SAM" id="MobiDB-lite"/>
    </source>
</evidence>
<keyword id="KW-0067">ATP-binding</keyword>
<keyword id="KW-0143">Chaperone</keyword>
<keyword id="KW-0547">Nucleotide-binding</keyword>
<keyword id="KW-0597">Phosphoprotein</keyword>
<keyword id="KW-0346">Stress response</keyword>
<proteinExistence type="inferred from homology"/>